<feature type="chain" id="PRO_0000212290" description="Adapter protein MecA">
    <location>
        <begin position="1"/>
        <end position="245"/>
    </location>
</feature>
<gene>
    <name evidence="1" type="primary">mecA</name>
    <name type="ordered locus">spr1220</name>
</gene>
<dbReference type="EMBL" id="AE007317">
    <property type="protein sequence ID" value="AAL00024.1"/>
    <property type="molecule type" value="Genomic_DNA"/>
</dbReference>
<dbReference type="PIR" id="C98024">
    <property type="entry name" value="C98024"/>
</dbReference>
<dbReference type="RefSeq" id="NP_358813.1">
    <property type="nucleotide sequence ID" value="NC_003098.1"/>
</dbReference>
<dbReference type="RefSeq" id="WP_000782664.1">
    <property type="nucleotide sequence ID" value="NC_003098.1"/>
</dbReference>
<dbReference type="SMR" id="Q8DPE0"/>
<dbReference type="STRING" id="171101.spr1220"/>
<dbReference type="KEGG" id="spr:spr1220"/>
<dbReference type="PATRIC" id="fig|171101.6.peg.1325"/>
<dbReference type="eggNOG" id="COG4862">
    <property type="taxonomic scope" value="Bacteria"/>
</dbReference>
<dbReference type="HOGENOM" id="CLU_071496_1_0_9"/>
<dbReference type="Proteomes" id="UP000000586">
    <property type="component" value="Chromosome"/>
</dbReference>
<dbReference type="GO" id="GO:0030674">
    <property type="term" value="F:protein-macromolecule adaptor activity"/>
    <property type="evidence" value="ECO:0007669"/>
    <property type="project" value="UniProtKB-UniRule"/>
</dbReference>
<dbReference type="Gene3D" id="3.30.70.1950">
    <property type="match status" value="1"/>
</dbReference>
<dbReference type="HAMAP" id="MF_01124">
    <property type="entry name" value="MecA"/>
    <property type="match status" value="1"/>
</dbReference>
<dbReference type="InterPro" id="IPR038471">
    <property type="entry name" value="MecA_C_sf"/>
</dbReference>
<dbReference type="InterPro" id="IPR008681">
    <property type="entry name" value="Neg-reg_MecA"/>
</dbReference>
<dbReference type="NCBIfam" id="NF002643">
    <property type="entry name" value="PRK02315.1-4"/>
    <property type="match status" value="1"/>
</dbReference>
<dbReference type="PANTHER" id="PTHR39161">
    <property type="entry name" value="ADAPTER PROTEIN MECA"/>
    <property type="match status" value="1"/>
</dbReference>
<dbReference type="PANTHER" id="PTHR39161:SF1">
    <property type="entry name" value="ADAPTER PROTEIN MECA 1"/>
    <property type="match status" value="1"/>
</dbReference>
<dbReference type="Pfam" id="PF05389">
    <property type="entry name" value="MecA"/>
    <property type="match status" value="1"/>
</dbReference>
<dbReference type="PIRSF" id="PIRSF029008">
    <property type="entry name" value="MecA"/>
    <property type="match status" value="1"/>
</dbReference>
<reference key="1">
    <citation type="journal article" date="2001" name="J. Bacteriol.">
        <title>Genome of the bacterium Streptococcus pneumoniae strain R6.</title>
        <authorList>
            <person name="Hoskins J."/>
            <person name="Alborn W.E. Jr."/>
            <person name="Arnold J."/>
            <person name="Blaszczak L.C."/>
            <person name="Burgett S."/>
            <person name="DeHoff B.S."/>
            <person name="Estrem S.T."/>
            <person name="Fritz L."/>
            <person name="Fu D.-J."/>
            <person name="Fuller W."/>
            <person name="Geringer C."/>
            <person name="Gilmour R."/>
            <person name="Glass J.S."/>
            <person name="Khoja H."/>
            <person name="Kraft A.R."/>
            <person name="Lagace R.E."/>
            <person name="LeBlanc D.J."/>
            <person name="Lee L.N."/>
            <person name="Lefkowitz E.J."/>
            <person name="Lu J."/>
            <person name="Matsushima P."/>
            <person name="McAhren S.M."/>
            <person name="McHenney M."/>
            <person name="McLeaster K."/>
            <person name="Mundy C.W."/>
            <person name="Nicas T.I."/>
            <person name="Norris F.H."/>
            <person name="O'Gara M."/>
            <person name="Peery R.B."/>
            <person name="Robertson G.T."/>
            <person name="Rockey P."/>
            <person name="Sun P.-M."/>
            <person name="Winkler M.E."/>
            <person name="Yang Y."/>
            <person name="Young-Bellido M."/>
            <person name="Zhao G."/>
            <person name="Zook C.A."/>
            <person name="Baltz R.H."/>
            <person name="Jaskunas S.R."/>
            <person name="Rosteck P.R. Jr."/>
            <person name="Skatrud P.L."/>
            <person name="Glass J.I."/>
        </authorList>
    </citation>
    <scope>NUCLEOTIDE SEQUENCE [LARGE SCALE GENOMIC DNA]</scope>
    <source>
        <strain>ATCC BAA-255 / R6</strain>
    </source>
</reference>
<proteinExistence type="inferred from homology"/>
<name>MECA_STRR6</name>
<keyword id="KW-1185">Reference proteome</keyword>
<sequence length="245" mass="28363">MKMKQISDTTLKITISLEDLMDRGMEIADFLVPQEKTEEFFYAILDELEMPDSFLDTGMLSFRVTPKPDKVDVFVTKSKIDQNLDFEDLSDLPDMEELAQMSPDEFIKTLEKSIADKTKDDIEAIQSLEQVEAKEEEQEQAEQEAESKKEPYIYYILSFAKLADLVAFAKTVTFEMETSELYKMNERYYLTILVDIENHPSPYPAWLLARMREFADDSDISRSVLQEYGQVLMSHDAVLNLQKIG</sequence>
<accession>Q8DPE0</accession>
<protein>
    <recommendedName>
        <fullName evidence="1">Adapter protein MecA</fullName>
    </recommendedName>
</protein>
<organism>
    <name type="scientific">Streptococcus pneumoniae (strain ATCC BAA-255 / R6)</name>
    <dbReference type="NCBI Taxonomy" id="171101"/>
    <lineage>
        <taxon>Bacteria</taxon>
        <taxon>Bacillati</taxon>
        <taxon>Bacillota</taxon>
        <taxon>Bacilli</taxon>
        <taxon>Lactobacillales</taxon>
        <taxon>Streptococcaceae</taxon>
        <taxon>Streptococcus</taxon>
    </lineage>
</organism>
<comment type="function">
    <text evidence="1">Enables the recognition and targeting of unfolded and aggregated proteins to the ClpC protease or to other proteins involved in proteolysis.</text>
</comment>
<comment type="subunit">
    <text evidence="1">Homodimer.</text>
</comment>
<comment type="domain">
    <text>The N-terminal domain probably binds unfolded/aggregated proteins; the C-terminal domain interacts with ClpC.</text>
</comment>
<comment type="similarity">
    <text evidence="1">Belongs to the MecA family.</text>
</comment>
<evidence type="ECO:0000255" key="1">
    <source>
        <dbReference type="HAMAP-Rule" id="MF_01124"/>
    </source>
</evidence>